<organism>
    <name type="scientific">Drosophila melanogaster</name>
    <name type="common">Fruit fly</name>
    <dbReference type="NCBI Taxonomy" id="7227"/>
    <lineage>
        <taxon>Eukaryota</taxon>
        <taxon>Metazoa</taxon>
        <taxon>Ecdysozoa</taxon>
        <taxon>Arthropoda</taxon>
        <taxon>Hexapoda</taxon>
        <taxon>Insecta</taxon>
        <taxon>Pterygota</taxon>
        <taxon>Neoptera</taxon>
        <taxon>Endopterygota</taxon>
        <taxon>Diptera</taxon>
        <taxon>Brachycera</taxon>
        <taxon>Muscomorpha</taxon>
        <taxon>Ephydroidea</taxon>
        <taxon>Drosophilidae</taxon>
        <taxon>Drosophila</taxon>
        <taxon>Sophophora</taxon>
    </lineage>
</organism>
<sequence length="220" mass="23898">MAAGTTTKERLERLINAKKQLEAQINRNGQILAANDNVGMSGPLVDAEGFPRNDIDVYQVRLARQTIICLQNDHKELMNQIQTLLNQYHSEIATTDPELVNRASALDLDSDRSPGGANITDLAPARAIVVVNLVSPDSPAERAGLCAGDAILRFGSINSGNFKGDLAQIGELVRNMQSQNVQLKVKRGEQQLDLILVPKTWSGRGLLGCNIVLPPEAMDH</sequence>
<name>PSMD9_DROME</name>
<keyword id="KW-0143">Chaperone</keyword>
<keyword id="KW-0175">Coiled coil</keyword>
<keyword id="KW-1185">Reference proteome</keyword>
<dbReference type="EMBL" id="AE014297">
    <property type="protein sequence ID" value="AAF54971.1"/>
    <property type="molecule type" value="Genomic_DNA"/>
</dbReference>
<dbReference type="EMBL" id="AY071064">
    <property type="protein sequence ID" value="AAL48686.1"/>
    <property type="molecule type" value="mRNA"/>
</dbReference>
<dbReference type="RefSeq" id="NP_650301.1">
    <property type="nucleotide sequence ID" value="NM_142044.4"/>
</dbReference>
<dbReference type="SMR" id="Q9VFS8"/>
<dbReference type="BioGRID" id="66752">
    <property type="interactions" value="22"/>
</dbReference>
<dbReference type="FunCoup" id="Q9VFS8">
    <property type="interactions" value="2876"/>
</dbReference>
<dbReference type="IntAct" id="Q9VFS8">
    <property type="interactions" value="21"/>
</dbReference>
<dbReference type="STRING" id="7227.FBpp0082314"/>
<dbReference type="PaxDb" id="7227-FBpp0082314"/>
<dbReference type="DNASU" id="41672"/>
<dbReference type="EnsemblMetazoa" id="FBtr0082849">
    <property type="protein sequence ID" value="FBpp0082314"/>
    <property type="gene ID" value="FBgn0038166"/>
</dbReference>
<dbReference type="GeneID" id="41672"/>
<dbReference type="KEGG" id="dme:Dmel_CG9588"/>
<dbReference type="UCSC" id="CG9588-RA">
    <property type="organism name" value="d. melanogaster"/>
</dbReference>
<dbReference type="AGR" id="FB:FBgn0038166"/>
<dbReference type="FlyBase" id="FBgn0038166">
    <property type="gene designation" value="CG9588"/>
</dbReference>
<dbReference type="VEuPathDB" id="VectorBase:FBgn0038166"/>
<dbReference type="eggNOG" id="KOG3129">
    <property type="taxonomic scope" value="Eukaryota"/>
</dbReference>
<dbReference type="GeneTree" id="ENSGT00390000004147"/>
<dbReference type="HOGENOM" id="CLU_073146_2_1_1"/>
<dbReference type="InParanoid" id="Q9VFS8"/>
<dbReference type="OMA" id="DWGGRGM"/>
<dbReference type="OrthoDB" id="72325at2759"/>
<dbReference type="PhylomeDB" id="Q9VFS8"/>
<dbReference type="Reactome" id="R-DME-9907900">
    <property type="pathway name" value="Proteasome assembly"/>
</dbReference>
<dbReference type="BioGRID-ORCS" id="41672">
    <property type="hits" value="0 hits in 1 CRISPR screen"/>
</dbReference>
<dbReference type="GenomeRNAi" id="41672"/>
<dbReference type="PRO" id="PR:Q9VFS8"/>
<dbReference type="Proteomes" id="UP000000803">
    <property type="component" value="Chromosome 3R"/>
</dbReference>
<dbReference type="Bgee" id="FBgn0038166">
    <property type="expression patterns" value="Expressed in T neuron T5b (Drosophila) in embryonic/larval optic lobe (Drosophila) and 110 other cell types or tissues"/>
</dbReference>
<dbReference type="GO" id="GO:0005737">
    <property type="term" value="C:cytoplasm"/>
    <property type="evidence" value="ECO:0000318"/>
    <property type="project" value="GO_Central"/>
</dbReference>
<dbReference type="GO" id="GO:0005634">
    <property type="term" value="C:nucleus"/>
    <property type="evidence" value="ECO:0000318"/>
    <property type="project" value="GO_Central"/>
</dbReference>
<dbReference type="GO" id="GO:0070682">
    <property type="term" value="P:proteasome regulatory particle assembly"/>
    <property type="evidence" value="ECO:0000318"/>
    <property type="project" value="GO_Central"/>
</dbReference>
<dbReference type="FunFam" id="2.30.42.10:FF:000107">
    <property type="entry name" value="26S proteasome non-ATPase regulatory subunit 9"/>
    <property type="match status" value="1"/>
</dbReference>
<dbReference type="Gene3D" id="2.30.42.10">
    <property type="match status" value="1"/>
</dbReference>
<dbReference type="Gene3D" id="6.10.140.1710">
    <property type="match status" value="1"/>
</dbReference>
<dbReference type="InterPro" id="IPR040815">
    <property type="entry name" value="Nas2_N"/>
</dbReference>
<dbReference type="InterPro" id="IPR001478">
    <property type="entry name" value="PDZ"/>
</dbReference>
<dbReference type="InterPro" id="IPR041489">
    <property type="entry name" value="PDZ_6"/>
</dbReference>
<dbReference type="InterPro" id="IPR036034">
    <property type="entry name" value="PDZ_sf"/>
</dbReference>
<dbReference type="InterPro" id="IPR035269">
    <property type="entry name" value="PSMD9"/>
</dbReference>
<dbReference type="PANTHER" id="PTHR12651">
    <property type="entry name" value="26S PROTEASOME NON-ATPASE REGULATORY SUBUNIT 9"/>
    <property type="match status" value="1"/>
</dbReference>
<dbReference type="PANTHER" id="PTHR12651:SF1">
    <property type="entry name" value="26S PROTEASOME NON-ATPASE REGULATORY SUBUNIT 9"/>
    <property type="match status" value="1"/>
</dbReference>
<dbReference type="Pfam" id="PF18265">
    <property type="entry name" value="Nas2_N"/>
    <property type="match status" value="1"/>
</dbReference>
<dbReference type="Pfam" id="PF17820">
    <property type="entry name" value="PDZ_6"/>
    <property type="match status" value="1"/>
</dbReference>
<dbReference type="SMART" id="SM00228">
    <property type="entry name" value="PDZ"/>
    <property type="match status" value="1"/>
</dbReference>
<dbReference type="SUPFAM" id="SSF50156">
    <property type="entry name" value="PDZ domain-like"/>
    <property type="match status" value="1"/>
</dbReference>
<feature type="chain" id="PRO_0000424893" description="26S proteasome non-ATPase regulatory subunit 9">
    <location>
        <begin position="1"/>
        <end position="220"/>
    </location>
</feature>
<feature type="domain" description="PDZ" evidence="2">
    <location>
        <begin position="102"/>
        <end position="200"/>
    </location>
</feature>
<feature type="coiled-coil region" evidence="2">
    <location>
        <begin position="4"/>
        <end position="32"/>
    </location>
</feature>
<feature type="coiled-coil region" evidence="2">
    <location>
        <begin position="61"/>
        <end position="91"/>
    </location>
</feature>
<feature type="mutagenesis site" description="Abolishes interaction with PI31." evidence="4">
    <original>E</original>
    <variation>A</variation>
    <location>
        <position position="9"/>
    </location>
</feature>
<feature type="mutagenesis site" description="Does not affect interaction with PI31." evidence="4">
    <original>R</original>
    <variation>A</variation>
    <location>
        <position position="10"/>
    </location>
</feature>
<feature type="mutagenesis site" description="Does not affect interaction with PI31." evidence="4">
    <original>L</original>
    <variation>A</variation>
    <location>
        <position position="11"/>
    </location>
</feature>
<feature type="mutagenesis site" description="Does not affect interaction with PI31." evidence="4">
    <original>P</original>
    <variation>A</variation>
    <location>
        <position position="114"/>
    </location>
</feature>
<feature type="mutagenesis site" description="Does not affect interaction with PI31." evidence="4">
    <original>D</original>
    <variation>A</variation>
    <location>
        <position position="121"/>
    </location>
</feature>
<feature type="mutagenesis site" description="Does not affect interaction with PI31." evidence="4">
    <original>V</original>
    <variation>T</variation>
    <location>
        <position position="185"/>
    </location>
</feature>
<feature type="mutagenesis site" description="Abolishes interaction with PI31." evidence="4">
    <original>R</original>
    <variation>A</variation>
    <location>
        <position position="187"/>
    </location>
</feature>
<comment type="function">
    <text evidence="1">Acts as a chaperone during the assembly of the 26S proteasome, specifically of the base subcomplex of the PA700/19S regulatory complex (RC).</text>
</comment>
<comment type="subunit">
    <text evidence="4">Interacts with PI31; this interaction is increased by PI31 ADP-ribosylation. Interacts with Rpt5.</text>
</comment>
<comment type="interaction">
    <interactant intactId="EBI-166054">
        <id>Q9VFS8</id>
    </interactant>
    <interactant intactId="EBI-144377">
        <id>Q9V637</id>
        <label>PI31</label>
    </interactant>
    <organismsDiffer>false</organismsDiffer>
    <experiments>3</experiments>
</comment>
<comment type="similarity">
    <text evidence="1">Belongs to the proteasome subunit p27 family.</text>
</comment>
<accession>Q9VFS8</accession>
<gene>
    <name type="ORF">CG9588</name>
</gene>
<proteinExistence type="evidence at protein level"/>
<protein>
    <recommendedName>
        <fullName evidence="1">26S proteasome non-ATPase regulatory subunit 9</fullName>
    </recommendedName>
    <alternativeName>
        <fullName evidence="1">26S proteasome regulatory subunit p27</fullName>
        <shortName evidence="5">dp27</shortName>
    </alternativeName>
</protein>
<reference evidence="7" key="1">
    <citation type="journal article" date="2000" name="Science">
        <title>The genome sequence of Drosophila melanogaster.</title>
        <authorList>
            <person name="Adams M.D."/>
            <person name="Celniker S.E."/>
            <person name="Holt R.A."/>
            <person name="Evans C.A."/>
            <person name="Gocayne J.D."/>
            <person name="Amanatides P.G."/>
            <person name="Scherer S.E."/>
            <person name="Li P.W."/>
            <person name="Hoskins R.A."/>
            <person name="Galle R.F."/>
            <person name="George R.A."/>
            <person name="Lewis S.E."/>
            <person name="Richards S."/>
            <person name="Ashburner M."/>
            <person name="Henderson S.N."/>
            <person name="Sutton G.G."/>
            <person name="Wortman J.R."/>
            <person name="Yandell M.D."/>
            <person name="Zhang Q."/>
            <person name="Chen L.X."/>
            <person name="Brandon R.C."/>
            <person name="Rogers Y.-H.C."/>
            <person name="Blazej R.G."/>
            <person name="Champe M."/>
            <person name="Pfeiffer B.D."/>
            <person name="Wan K.H."/>
            <person name="Doyle C."/>
            <person name="Baxter E.G."/>
            <person name="Helt G."/>
            <person name="Nelson C.R."/>
            <person name="Miklos G.L.G."/>
            <person name="Abril J.F."/>
            <person name="Agbayani A."/>
            <person name="An H.-J."/>
            <person name="Andrews-Pfannkoch C."/>
            <person name="Baldwin D."/>
            <person name="Ballew R.M."/>
            <person name="Basu A."/>
            <person name="Baxendale J."/>
            <person name="Bayraktaroglu L."/>
            <person name="Beasley E.M."/>
            <person name="Beeson K.Y."/>
            <person name="Benos P.V."/>
            <person name="Berman B.P."/>
            <person name="Bhandari D."/>
            <person name="Bolshakov S."/>
            <person name="Borkova D."/>
            <person name="Botchan M.R."/>
            <person name="Bouck J."/>
            <person name="Brokstein P."/>
            <person name="Brottier P."/>
            <person name="Burtis K.C."/>
            <person name="Busam D.A."/>
            <person name="Butler H."/>
            <person name="Cadieu E."/>
            <person name="Center A."/>
            <person name="Chandra I."/>
            <person name="Cherry J.M."/>
            <person name="Cawley S."/>
            <person name="Dahlke C."/>
            <person name="Davenport L.B."/>
            <person name="Davies P."/>
            <person name="de Pablos B."/>
            <person name="Delcher A."/>
            <person name="Deng Z."/>
            <person name="Mays A.D."/>
            <person name="Dew I."/>
            <person name="Dietz S.M."/>
            <person name="Dodson K."/>
            <person name="Doup L.E."/>
            <person name="Downes M."/>
            <person name="Dugan-Rocha S."/>
            <person name="Dunkov B.C."/>
            <person name="Dunn P."/>
            <person name="Durbin K.J."/>
            <person name="Evangelista C.C."/>
            <person name="Ferraz C."/>
            <person name="Ferriera S."/>
            <person name="Fleischmann W."/>
            <person name="Fosler C."/>
            <person name="Gabrielian A.E."/>
            <person name="Garg N.S."/>
            <person name="Gelbart W.M."/>
            <person name="Glasser K."/>
            <person name="Glodek A."/>
            <person name="Gong F."/>
            <person name="Gorrell J.H."/>
            <person name="Gu Z."/>
            <person name="Guan P."/>
            <person name="Harris M."/>
            <person name="Harris N.L."/>
            <person name="Harvey D.A."/>
            <person name="Heiman T.J."/>
            <person name="Hernandez J.R."/>
            <person name="Houck J."/>
            <person name="Hostin D."/>
            <person name="Houston K.A."/>
            <person name="Howland T.J."/>
            <person name="Wei M.-H."/>
            <person name="Ibegwam C."/>
            <person name="Jalali M."/>
            <person name="Kalush F."/>
            <person name="Karpen G.H."/>
            <person name="Ke Z."/>
            <person name="Kennison J.A."/>
            <person name="Ketchum K.A."/>
            <person name="Kimmel B.E."/>
            <person name="Kodira C.D."/>
            <person name="Kraft C.L."/>
            <person name="Kravitz S."/>
            <person name="Kulp D."/>
            <person name="Lai Z."/>
            <person name="Lasko P."/>
            <person name="Lei Y."/>
            <person name="Levitsky A.A."/>
            <person name="Li J.H."/>
            <person name="Li Z."/>
            <person name="Liang Y."/>
            <person name="Lin X."/>
            <person name="Liu X."/>
            <person name="Mattei B."/>
            <person name="McIntosh T.C."/>
            <person name="McLeod M.P."/>
            <person name="McPherson D."/>
            <person name="Merkulov G."/>
            <person name="Milshina N.V."/>
            <person name="Mobarry C."/>
            <person name="Morris J."/>
            <person name="Moshrefi A."/>
            <person name="Mount S.M."/>
            <person name="Moy M."/>
            <person name="Murphy B."/>
            <person name="Murphy L."/>
            <person name="Muzny D.M."/>
            <person name="Nelson D.L."/>
            <person name="Nelson D.R."/>
            <person name="Nelson K.A."/>
            <person name="Nixon K."/>
            <person name="Nusskern D.R."/>
            <person name="Pacleb J.M."/>
            <person name="Palazzolo M."/>
            <person name="Pittman G.S."/>
            <person name="Pan S."/>
            <person name="Pollard J."/>
            <person name="Puri V."/>
            <person name="Reese M.G."/>
            <person name="Reinert K."/>
            <person name="Remington K."/>
            <person name="Saunders R.D.C."/>
            <person name="Scheeler F."/>
            <person name="Shen H."/>
            <person name="Shue B.C."/>
            <person name="Siden-Kiamos I."/>
            <person name="Simpson M."/>
            <person name="Skupski M.P."/>
            <person name="Smith T.J."/>
            <person name="Spier E."/>
            <person name="Spradling A.C."/>
            <person name="Stapleton M."/>
            <person name="Strong R."/>
            <person name="Sun E."/>
            <person name="Svirskas R."/>
            <person name="Tector C."/>
            <person name="Turner R."/>
            <person name="Venter E."/>
            <person name="Wang A.H."/>
            <person name="Wang X."/>
            <person name="Wang Z.-Y."/>
            <person name="Wassarman D.A."/>
            <person name="Weinstock G.M."/>
            <person name="Weissenbach J."/>
            <person name="Williams S.M."/>
            <person name="Woodage T."/>
            <person name="Worley K.C."/>
            <person name="Wu D."/>
            <person name="Yang S."/>
            <person name="Yao Q.A."/>
            <person name="Ye J."/>
            <person name="Yeh R.-F."/>
            <person name="Zaveri J.S."/>
            <person name="Zhan M."/>
            <person name="Zhang G."/>
            <person name="Zhao Q."/>
            <person name="Zheng L."/>
            <person name="Zheng X.H."/>
            <person name="Zhong F.N."/>
            <person name="Zhong W."/>
            <person name="Zhou X."/>
            <person name="Zhu S.C."/>
            <person name="Zhu X."/>
            <person name="Smith H.O."/>
            <person name="Gibbs R.A."/>
            <person name="Myers E.W."/>
            <person name="Rubin G.M."/>
            <person name="Venter J.C."/>
        </authorList>
    </citation>
    <scope>NUCLEOTIDE SEQUENCE [LARGE SCALE GENOMIC DNA]</scope>
    <source>
        <strain>Berkeley</strain>
    </source>
</reference>
<reference evidence="7" key="2">
    <citation type="journal article" date="2002" name="Genome Biol.">
        <title>Annotation of the Drosophila melanogaster euchromatic genome: a systematic review.</title>
        <authorList>
            <person name="Misra S."/>
            <person name="Crosby M.A."/>
            <person name="Mungall C.J."/>
            <person name="Matthews B.B."/>
            <person name="Campbell K.S."/>
            <person name="Hradecky P."/>
            <person name="Huang Y."/>
            <person name="Kaminker J.S."/>
            <person name="Millburn G.H."/>
            <person name="Prochnik S.E."/>
            <person name="Smith C.D."/>
            <person name="Tupy J.L."/>
            <person name="Whitfield E.J."/>
            <person name="Bayraktaroglu L."/>
            <person name="Berman B.P."/>
            <person name="Bettencourt B.R."/>
            <person name="Celniker S.E."/>
            <person name="de Grey A.D.N.J."/>
            <person name="Drysdale R.A."/>
            <person name="Harris N.L."/>
            <person name="Richter J."/>
            <person name="Russo S."/>
            <person name="Schroeder A.J."/>
            <person name="Shu S.Q."/>
            <person name="Stapleton M."/>
            <person name="Yamada C."/>
            <person name="Ashburner M."/>
            <person name="Gelbart W.M."/>
            <person name="Rubin G.M."/>
            <person name="Lewis S.E."/>
        </authorList>
    </citation>
    <scope>GENOME REANNOTATION</scope>
    <source>
        <strain>Berkeley</strain>
    </source>
</reference>
<reference evidence="8" key="3">
    <citation type="journal article" date="2002" name="Genome Biol.">
        <title>A Drosophila full-length cDNA resource.</title>
        <authorList>
            <person name="Stapleton M."/>
            <person name="Carlson J.W."/>
            <person name="Brokstein P."/>
            <person name="Yu C."/>
            <person name="Champe M."/>
            <person name="George R.A."/>
            <person name="Guarin H."/>
            <person name="Kronmiller B."/>
            <person name="Pacleb J.M."/>
            <person name="Park S."/>
            <person name="Wan K.H."/>
            <person name="Rubin G.M."/>
            <person name="Celniker S.E."/>
        </authorList>
    </citation>
    <scope>NUCLEOTIDE SEQUENCE [LARGE SCALE MRNA]</scope>
    <source>
        <strain evidence="3">Berkeley</strain>
        <tissue evidence="3">Embryo</tissue>
    </source>
</reference>
<reference evidence="6" key="4">
    <citation type="journal article" date="2013" name="Cell">
        <title>Proteasome regulation by ADP-ribosylation.</title>
        <authorList>
            <person name="Cho-Park P.F."/>
            <person name="Steller H."/>
        </authorList>
    </citation>
    <scope>INTERACTION WITH PI31 AND RPT5</scope>
    <scope>MUTAGENESIS OF GLU-9; ARG-10; LEU-11; PRO-114; ASP-121; VAL-185 AND ARG-187</scope>
</reference>
<evidence type="ECO:0000250" key="1">
    <source>
        <dbReference type="UniProtKB" id="O00233"/>
    </source>
</evidence>
<evidence type="ECO:0000255" key="2"/>
<evidence type="ECO:0000269" key="3">
    <source>
    </source>
</evidence>
<evidence type="ECO:0000269" key="4">
    <source>
    </source>
</evidence>
<evidence type="ECO:0000303" key="5">
    <source>
    </source>
</evidence>
<evidence type="ECO:0000305" key="6"/>
<evidence type="ECO:0000312" key="7">
    <source>
        <dbReference type="EMBL" id="AAF54971.1"/>
    </source>
</evidence>
<evidence type="ECO:0000312" key="8">
    <source>
        <dbReference type="EMBL" id="AAL48686.1"/>
    </source>
</evidence>